<reference key="1">
    <citation type="journal article" date="1990" name="Mol. Cell. Biol.">
        <title>The product of the Saccharomyces cerevisiae cell cycle gene DBF2 has homology with protein kinases and is periodically expressed in the cell cycle.</title>
        <authorList>
            <person name="Johnston L.H."/>
            <person name="Eberly S.L."/>
            <person name="Chapman J.W."/>
            <person name="Araki H."/>
            <person name="Sugino A."/>
        </authorList>
    </citation>
    <scope>NUCLEOTIDE SEQUENCE [GENOMIC DNA]</scope>
    <scope>INDUCTION</scope>
</reference>
<reference key="2">
    <citation type="journal article" date="1991" name="Gene">
        <title>The cell-cycle-regulated budding yeast gene DBF2, encoding a putative protein kinase, has a homologue that is not under cell-cycle control.</title>
        <authorList>
            <person name="Toyn J.H."/>
            <person name="Araki H."/>
            <person name="Sugino A."/>
            <person name="Johnston L.H."/>
        </authorList>
    </citation>
    <scope>SEQUENCE REVISION TO N-TERMINUS</scope>
</reference>
<reference key="3">
    <citation type="journal article" date="1997" name="Nature">
        <title>The nucleotide sequence of Saccharomyces cerevisiae chromosome VII.</title>
        <authorList>
            <person name="Tettelin H."/>
            <person name="Agostoni-Carbone M.L."/>
            <person name="Albermann K."/>
            <person name="Albers M."/>
            <person name="Arroyo J."/>
            <person name="Backes U."/>
            <person name="Barreiros T."/>
            <person name="Bertani I."/>
            <person name="Bjourson A.J."/>
            <person name="Brueckner M."/>
            <person name="Bruschi C.V."/>
            <person name="Carignani G."/>
            <person name="Castagnoli L."/>
            <person name="Cerdan E."/>
            <person name="Clemente M.L."/>
            <person name="Coblenz A."/>
            <person name="Coglievina M."/>
            <person name="Coissac E."/>
            <person name="Defoor E."/>
            <person name="Del Bino S."/>
            <person name="Delius H."/>
            <person name="Delneri D."/>
            <person name="de Wergifosse P."/>
            <person name="Dujon B."/>
            <person name="Durand P."/>
            <person name="Entian K.-D."/>
            <person name="Eraso P."/>
            <person name="Escribano V."/>
            <person name="Fabiani L."/>
            <person name="Fartmann B."/>
            <person name="Feroli F."/>
            <person name="Feuermann M."/>
            <person name="Frontali L."/>
            <person name="Garcia-Gonzalez M."/>
            <person name="Garcia-Saez M.I."/>
            <person name="Goffeau A."/>
            <person name="Guerreiro P."/>
            <person name="Hani J."/>
            <person name="Hansen M."/>
            <person name="Hebling U."/>
            <person name="Hernandez K."/>
            <person name="Heumann K."/>
            <person name="Hilger F."/>
            <person name="Hofmann B."/>
            <person name="Indge K.J."/>
            <person name="James C.M."/>
            <person name="Klima R."/>
            <person name="Koetter P."/>
            <person name="Kramer B."/>
            <person name="Kramer W."/>
            <person name="Lauquin G."/>
            <person name="Leuther H."/>
            <person name="Louis E.J."/>
            <person name="Maillier E."/>
            <person name="Marconi A."/>
            <person name="Martegani E."/>
            <person name="Mazon M.J."/>
            <person name="Mazzoni C."/>
            <person name="McReynolds A.D.K."/>
            <person name="Melchioretto P."/>
            <person name="Mewes H.-W."/>
            <person name="Minenkova O."/>
            <person name="Mueller-Auer S."/>
            <person name="Nawrocki A."/>
            <person name="Netter P."/>
            <person name="Neu R."/>
            <person name="Nombela C."/>
            <person name="Oliver S.G."/>
            <person name="Panzeri L."/>
            <person name="Paoluzi S."/>
            <person name="Plevani P."/>
            <person name="Portetelle D."/>
            <person name="Portillo F."/>
            <person name="Potier S."/>
            <person name="Purnelle B."/>
            <person name="Rieger M."/>
            <person name="Riles L."/>
            <person name="Rinaldi T."/>
            <person name="Robben J."/>
            <person name="Rodrigues-Pousada C."/>
            <person name="Rodriguez-Belmonte E."/>
            <person name="Rodriguez-Torres A.M."/>
            <person name="Rose M."/>
            <person name="Ruzzi M."/>
            <person name="Saliola M."/>
            <person name="Sanchez-Perez M."/>
            <person name="Schaefer B."/>
            <person name="Schaefer M."/>
            <person name="Scharfe M."/>
            <person name="Schmidheini T."/>
            <person name="Schreer A."/>
            <person name="Skala J."/>
            <person name="Souciet J.-L."/>
            <person name="Steensma H.Y."/>
            <person name="Talla E."/>
            <person name="Thierry A."/>
            <person name="Vandenbol M."/>
            <person name="van der Aart Q.J.M."/>
            <person name="Van Dyck L."/>
            <person name="Vanoni M."/>
            <person name="Verhasselt P."/>
            <person name="Voet M."/>
            <person name="Volckaert G."/>
            <person name="Wambutt R."/>
            <person name="Watson M.D."/>
            <person name="Weber N."/>
            <person name="Wedler E."/>
            <person name="Wedler H."/>
            <person name="Wipfli P."/>
            <person name="Wolf K."/>
            <person name="Wright L.F."/>
            <person name="Zaccaria P."/>
            <person name="Zimmermann M."/>
            <person name="Zollner A."/>
            <person name="Kleine K."/>
        </authorList>
    </citation>
    <scope>NUCLEOTIDE SEQUENCE [LARGE SCALE GENOMIC DNA]</scope>
    <source>
        <strain>ATCC 204508 / S288c</strain>
    </source>
</reference>
<reference key="4">
    <citation type="journal article" date="2014" name="G3 (Bethesda)">
        <title>The reference genome sequence of Saccharomyces cerevisiae: Then and now.</title>
        <authorList>
            <person name="Engel S.R."/>
            <person name="Dietrich F.S."/>
            <person name="Fisk D.G."/>
            <person name="Binkley G."/>
            <person name="Balakrishnan R."/>
            <person name="Costanzo M.C."/>
            <person name="Dwight S.S."/>
            <person name="Hitz B.C."/>
            <person name="Karra K."/>
            <person name="Nash R.S."/>
            <person name="Weng S."/>
            <person name="Wong E.D."/>
            <person name="Lloyd P."/>
            <person name="Skrzypek M.S."/>
            <person name="Miyasato S.R."/>
            <person name="Simison M."/>
            <person name="Cherry J.M."/>
        </authorList>
    </citation>
    <scope>GENOME REANNOTATION</scope>
    <source>
        <strain>ATCC 204508 / S288c</strain>
    </source>
</reference>
<reference key="5">
    <citation type="journal article" date="1994" name="EMBO J.">
        <title>The Dbf2 and Dbf20 protein kinases of budding yeast are activated after the metaphase to anaphase cell cycle transition.</title>
        <authorList>
            <person name="Toyn J.H."/>
            <person name="Johnston L.H."/>
        </authorList>
    </citation>
    <scope>FUNCTION</scope>
    <scope>PHOSPHORYLATION</scope>
    <scope>INDUCTION</scope>
</reference>
<reference key="6">
    <citation type="journal article" date="1998" name="Mol. Cell. Biol.">
        <title>DBF2 protein kinase binds to and acts through the cell cycle-regulated MOB1 protein.</title>
        <authorList>
            <person name="Komarnitsky S.I."/>
            <person name="Chiang Y.-C."/>
            <person name="Luca F.C."/>
            <person name="Chen J."/>
            <person name="Toyn J.H."/>
            <person name="Winey M."/>
            <person name="Johnston L.H."/>
            <person name="Denis C.L."/>
        </authorList>
    </citation>
    <scope>INTERACTION WITH MOB1</scope>
    <scope>FUNCTION OF THE DBF2-MOB1 COMPLEX</scope>
</reference>
<reference key="7">
    <citation type="journal article" date="1998" name="Mol. Gen. Genet.">
        <title>The Cdc14 phosphatase is functionally associated with the Dbf2 protein kinase in Saccharomyces cerevisiae.</title>
        <authorList>
            <person name="Grandin N."/>
            <person name="de Almeida A."/>
            <person name="Charbonneau M."/>
        </authorList>
    </citation>
    <scope>FUNCTION</scope>
</reference>
<reference key="8">
    <citation type="journal article" date="1999" name="EMBO J.">
        <title>A Bub2p-dependent spindle checkpoint pathway regulates the Dbf2p kinase in budding yeast.</title>
        <authorList>
            <person name="Fesquet D."/>
            <person name="Fitzpatrick P.J."/>
            <person name="Johnson A.L."/>
            <person name="Kramer K.M."/>
            <person name="Toyn J.H."/>
            <person name="Johnston L.H."/>
        </authorList>
    </citation>
    <scope>FUNCTION</scope>
    <scope>ACTIVITY REGULATION</scope>
</reference>
<reference key="9">
    <citation type="journal article" date="2000" name="J. Cell Sci.">
        <title>The budding yeast Dbf2 protein kinase localises to the centrosome and moves to the bud neck in late mitosis.</title>
        <authorList>
            <person name="Frenz L.M."/>
            <person name="Lee S.E."/>
            <person name="Fesquet D."/>
            <person name="Johnston L.H."/>
        </authorList>
    </citation>
    <scope>SUBCELLULAR LOCATION</scope>
    <scope>FUNCTION</scope>
</reference>
<reference key="10">
    <citation type="journal article" date="2001" name="Curr. Biol.">
        <title>Order of function of the budding-yeast mitotic exit-network proteins Tem1, Cdc15, Mob1, Dbf2, and Cdc5.</title>
        <authorList>
            <person name="Lee S.E."/>
            <person name="Frenz L.M."/>
            <person name="Wells N.J."/>
            <person name="Johnson A.L."/>
            <person name="Johnston L.H."/>
        </authorList>
    </citation>
    <scope>FUNCTION</scope>
    <scope>SUBCELLULAR LOCATION</scope>
</reference>
<reference key="11">
    <citation type="journal article" date="2001" name="Genes Genet. Syst.">
        <title>Regulation of the localization of Dbf2 and Mob1 during cell division of Saccharomyces cerevisiae.</title>
        <authorList>
            <person name="Yoshida S."/>
            <person name="Toh-e A."/>
        </authorList>
    </citation>
    <scope>SUBCELLULAR LOCATION</scope>
</reference>
<reference key="12">
    <citation type="journal article" date="2001" name="Mol. Biol. Cell">
        <title>Regulation of the mitotic exit protein kinases Cdc15 and Dbf2.</title>
        <authorList>
            <person name="Visintin R."/>
            <person name="Amon A."/>
        </authorList>
    </citation>
    <scope>SUBCELLULAR LOCATION</scope>
    <scope>FUNCTION</scope>
</reference>
<reference key="13">
    <citation type="journal article" date="2001" name="Proc. Natl. Acad. Sci. U.S.A.">
        <title>Protein kinase Cdc15 activates the Dbf2-Mob1 kinase complex.</title>
        <authorList>
            <person name="Mah A.S."/>
            <person name="Jang J."/>
            <person name="Deshaies R.J."/>
        </authorList>
    </citation>
    <scope>FUNCTION</scope>
    <scope>ACTIVITY REGULATION</scope>
    <scope>PHOSPHORYLATION AT SER-374 AND THR-544</scope>
</reference>
<reference key="14">
    <citation type="journal article" date="2003" name="Mol. Biol. Cell">
        <title>The role of the polo kinase Cdc5 in controlling Cdc14 localization.</title>
        <authorList>
            <person name="Visintin R."/>
            <person name="Stegmeier F."/>
            <person name="Amon A."/>
        </authorList>
    </citation>
    <scope>FUNCTION</scope>
    <scope>ACTIVITY REGULATION</scope>
</reference>
<reference key="15">
    <citation type="journal article" date="2003" name="Mol. Biol. Cell">
        <title>Inactivation of mitotic kinase triggers translocation of MEN components to mother-daughter neck in yeast.</title>
        <authorList>
            <person name="Hwa Lim H."/>
            <person name="Yeong F.M."/>
            <person name="Surana U."/>
        </authorList>
    </citation>
    <scope>SUBCELLULAR LOCATION</scope>
</reference>
<reference key="16">
    <citation type="journal article" date="2003" name="Mol. Cell. Biol.">
        <title>Mitotic exit regulation through distinct domains within the protein kinase Cdc15.</title>
        <authorList>
            <person name="Bardin A.J."/>
            <person name="Boselli M.G."/>
            <person name="Amon A."/>
        </authorList>
    </citation>
    <scope>FUNCTION</scope>
    <scope>ACTIVITY REGULATION</scope>
</reference>
<reference key="17">
    <citation type="journal article" date="2003" name="Nature">
        <title>Global analysis of protein expression in yeast.</title>
        <authorList>
            <person name="Ghaemmaghami S."/>
            <person name="Huh W.-K."/>
            <person name="Bower K."/>
            <person name="Howson R.W."/>
            <person name="Belle A."/>
            <person name="Dephoure N."/>
            <person name="O'Shea E.K."/>
            <person name="Weissman J.S."/>
        </authorList>
    </citation>
    <scope>LEVEL OF PROTEIN EXPRESSION [LARGE SCALE ANALYSIS]</scope>
</reference>
<reference key="18">
    <citation type="journal article" date="2005" name="BMC Biochem.">
        <title>Substrate specificity analysis of protein kinase complex Dbf2-Mob1 by peptide library and proteome array screening.</title>
        <authorList>
            <person name="Mah A.S."/>
            <person name="Elia A.E."/>
            <person name="Devgan G."/>
            <person name="Ptacek J."/>
            <person name="Schutkowski M."/>
            <person name="Snyder M."/>
            <person name="Yaffe M.B."/>
            <person name="Deshaies R.J."/>
        </authorList>
    </citation>
    <scope>FUNCTION OF THE DBF2-MOB1 COMPLEX</scope>
</reference>
<reference key="19">
    <citation type="journal article" date="2005" name="Mol. Biol. Cell">
        <title>The mitotic exit network Mob1p-Dbf2p kinase complex localizes to the nucleus and regulates passenger protein localization.</title>
        <authorList>
            <person name="Stoepel J."/>
            <person name="Ottey M.A."/>
            <person name="Kurischko C."/>
            <person name="Hieter P."/>
            <person name="Luca F.C."/>
        </authorList>
    </citation>
    <scope>SUBCELLULAR LOCATION</scope>
    <scope>FUNCTION OF THE DBF2-MOB1 COMPLEX</scope>
</reference>
<reference key="20">
    <citation type="journal article" date="2007" name="Microbiology">
        <title>A novel role for the yeast protein kinase Dbf2p in vacuolar H+-ATPase function and sorbic acid stress tolerance.</title>
        <authorList>
            <person name="Makrantoni V."/>
            <person name="Dennison P."/>
            <person name="Stark M.J."/>
            <person name="Coote P.J."/>
        </authorList>
    </citation>
    <scope>FUNCTION</scope>
</reference>
<reference key="21">
    <citation type="journal article" date="2008" name="Mol. Cell. Proteomics">
        <title>A multidimensional chromatography technology for in-depth phosphoproteome analysis.</title>
        <authorList>
            <person name="Albuquerque C.P."/>
            <person name="Smolka M.B."/>
            <person name="Payne S.H."/>
            <person name="Bafna V."/>
            <person name="Eng J."/>
            <person name="Zhou H."/>
        </authorList>
    </citation>
    <scope>PHOSPHORYLATION [LARGE SCALE ANALYSIS] AT SER-374</scope>
    <scope>IDENTIFICATION BY MASS SPECTROMETRY [LARGE SCALE ANALYSIS]</scope>
</reference>
<reference key="22">
    <citation type="journal article" date="2009" name="J. Cell Biol.">
        <title>Dbf2-Mob1 drives relocalization of protein phosphatase Cdc14 to the cytoplasm during exit from mitosis.</title>
        <authorList>
            <person name="Mohl D.A."/>
            <person name="Huddleston M.J."/>
            <person name="Collingwood T.S."/>
            <person name="Annan R.S."/>
            <person name="Deshaies R.J."/>
        </authorList>
    </citation>
    <scope>FUNCTION IN PHOSPHORYLATION OF CDC14</scope>
</reference>
<reference key="23">
    <citation type="journal article" date="2009" name="Science">
        <title>Global analysis of Cdk1 substrate phosphorylation sites provides insights into evolution.</title>
        <authorList>
            <person name="Holt L.J."/>
            <person name="Tuch B.B."/>
            <person name="Villen J."/>
            <person name="Johnson A.D."/>
            <person name="Gygi S.P."/>
            <person name="Morgan D.O."/>
        </authorList>
    </citation>
    <scope>PHOSPHORYLATION [LARGE SCALE ANALYSIS] AT SER-17; SER-20 AND SER-74</scope>
    <scope>IDENTIFICATION BY MASS SPECTROMETRY [LARGE SCALE ANALYSIS]</scope>
</reference>
<reference key="24">
    <citation type="journal article" date="2010" name="J. Cell Biol.">
        <title>Mutual regulation of cyclin-dependent kinase and the mitotic exit network.</title>
        <authorList>
            <person name="Konig C."/>
            <person name="Maekawa H."/>
            <person name="Schiebel E."/>
        </authorList>
    </citation>
    <scope>FUNCTION</scope>
    <scope>ACTIVITY REGULATION</scope>
</reference>
<reference key="25">
    <citation type="journal article" date="2010" name="J. Cell Sci.">
        <title>Targeted localization of Inn1, Cyk3 and Chs2 by the mitotic-exit network regulates cytokinesis in budding yeast.</title>
        <authorList>
            <person name="Meitinger F."/>
            <person name="Petrova B."/>
            <person name="Lombardi I.M."/>
            <person name="Bertazzi D.T."/>
            <person name="Hub B."/>
            <person name="Zentgraf H."/>
            <person name="Pereira G."/>
        </authorList>
    </citation>
    <scope>FUNCTION</scope>
</reference>
<reference key="26">
    <citation type="journal article" date="2011" name="Cell">
        <title>Single-molecule mRNA decay measurements reveal promoter- regulated mRNA stability in yeast.</title>
        <authorList>
            <person name="Trcek T."/>
            <person name="Larson D.R."/>
            <person name="Moldon A."/>
            <person name="Query C.C."/>
            <person name="Singer R.H."/>
        </authorList>
    </citation>
    <scope>FUNCTION</scope>
    <scope>RNA-BINDING</scope>
</reference>
<reference key="27">
    <citation type="journal article" date="2012" name="Mol. Biol. Cell">
        <title>Mitotic exit kinase Dbf2 directly phosphorylates chitin synthase Chs2 to regulate cytokinesis in budding yeast.</title>
        <authorList>
            <person name="Oh Y."/>
            <person name="Chang K.J."/>
            <person name="Orlean P."/>
            <person name="Wloka C."/>
            <person name="Deshaies R."/>
            <person name="Bi E."/>
        </authorList>
    </citation>
    <scope>FUNCTION</scope>
</reference>
<reference key="28">
    <citation type="journal article" date="2013" name="Mol. Biol. Cell">
        <title>Dual function of the NDR-kinase Dbf2 in the regulation of the F-BAR protein Hof1 during cytokinesis.</title>
        <authorList>
            <person name="Meitinger F."/>
            <person name="Palani S."/>
            <person name="Hub B."/>
            <person name="Pereira G."/>
        </authorList>
    </citation>
    <scope>FUNCTION</scope>
</reference>
<sequence length="572" mass="66148">MLSKSEKNVDLLAGNMSNLSFDGHGTPGGTGLFPNQNITKRRTRPAGINDSPSPVKPSFFPYEDTSNMDIDEVSQPDMDVSNSPKKLPPKFYERATSNKTQRVVSVCKMYFLEHYCDMFDYVISRRQRTKQVLEYLQQQSQLPNSDQIKLNEEWSSYLQREHQVLRKRRLKPKNRDFEMITQVGQGGYGQVYLARKKDTKEVCALKILNKKLLFKLNETKHVLTERDILTTTRSEWLVKLLYAFQDLQSLYLAMEFVPGGDFRTLLINTRCLKSGHARFYISEMFCAVNALHDLGYTHRDLKPENFLIDAKGHIKLTDFGLAAGTISNERIESMKIRLEKIKDLEFPAFTEKSIEDRRKMYNQLREKEINYANSMVGSPDYMALEVLEGKKYDFTVDYWSLGCMLFESLVGYTPFSGSSTNETYDNLRRWKQTLRRPRQSDGRAAFSDRTWDLITRLIADPINRLRSFEHVKRMSYFADINFSTLRSMIPPFTPQLDSETDAGYFDDFTSEADMAKYADVFKRQDKLTAMVDDSAVSSKLVGFTFRHRNGKQGSSGILFNGLEHSDPFSTFY</sequence>
<feature type="chain" id="PRO_0000085918" description="Cell cycle protein kinase DBF2">
    <location>
        <begin position="1"/>
        <end position="572"/>
    </location>
</feature>
<feature type="domain" description="Protein kinase" evidence="1">
    <location>
        <begin position="177"/>
        <end position="477"/>
    </location>
</feature>
<feature type="domain" description="AGC-kinase C-terminal" evidence="2">
    <location>
        <begin position="478"/>
        <end position="555"/>
    </location>
</feature>
<feature type="active site" description="Proton acceptor" evidence="1 3">
    <location>
        <position position="300"/>
    </location>
</feature>
<feature type="binding site" evidence="1">
    <location>
        <begin position="183"/>
        <end position="191"/>
    </location>
    <ligand>
        <name>ATP</name>
        <dbReference type="ChEBI" id="CHEBI:30616"/>
    </ligand>
</feature>
<feature type="binding site" evidence="1">
    <location>
        <position position="206"/>
    </location>
    <ligand>
        <name>ATP</name>
        <dbReference type="ChEBI" id="CHEBI:30616"/>
    </ligand>
</feature>
<feature type="modified residue" description="Phosphoserine" evidence="27">
    <location>
        <position position="17"/>
    </location>
</feature>
<feature type="modified residue" description="Phosphoserine" evidence="27">
    <location>
        <position position="20"/>
    </location>
</feature>
<feature type="modified residue" description="Phosphoserine" evidence="27">
    <location>
        <position position="74"/>
    </location>
</feature>
<feature type="modified residue" description="Phosphoserine; by CDC15" evidence="7 26">
    <location>
        <position position="374"/>
    </location>
</feature>
<feature type="modified residue" description="Phosphothreonine; by CDC15" evidence="7">
    <location>
        <position position="544"/>
    </location>
</feature>
<feature type="sequence conflict" description="In Ref. 1; AAA34559." evidence="25" ref="1">
    <original>LL</original>
    <variation>YM</variation>
    <location>
        <begin position="11"/>
        <end position="12"/>
    </location>
</feature>
<feature type="sequence conflict" description="In Ref. 1; AAA34559." evidence="25" ref="1">
    <original>H</original>
    <variation>Y</variation>
    <location>
        <position position="114"/>
    </location>
</feature>
<feature type="sequence conflict" description="In Ref. 1; AAA34559." evidence="25" ref="1">
    <original>D</original>
    <variation>E</variation>
    <location>
        <position position="246"/>
    </location>
</feature>
<keyword id="KW-0002">3D-structure</keyword>
<keyword id="KW-0067">ATP-binding</keyword>
<keyword id="KW-0131">Cell cycle</keyword>
<keyword id="KW-0963">Cytoplasm</keyword>
<keyword id="KW-0206">Cytoskeleton</keyword>
<keyword id="KW-0418">Kinase</keyword>
<keyword id="KW-0547">Nucleotide-binding</keyword>
<keyword id="KW-0539">Nucleus</keyword>
<keyword id="KW-0597">Phosphoprotein</keyword>
<keyword id="KW-1185">Reference proteome</keyword>
<keyword id="KW-0694">RNA-binding</keyword>
<keyword id="KW-0723">Serine/threonine-protein kinase</keyword>
<keyword id="KW-0808">Transferase</keyword>
<organism>
    <name type="scientific">Saccharomyces cerevisiae (strain ATCC 204508 / S288c)</name>
    <name type="common">Baker's yeast</name>
    <dbReference type="NCBI Taxonomy" id="559292"/>
    <lineage>
        <taxon>Eukaryota</taxon>
        <taxon>Fungi</taxon>
        <taxon>Dikarya</taxon>
        <taxon>Ascomycota</taxon>
        <taxon>Saccharomycotina</taxon>
        <taxon>Saccharomycetes</taxon>
        <taxon>Saccharomycetales</taxon>
        <taxon>Saccharomycetaceae</taxon>
        <taxon>Saccharomyces</taxon>
    </lineage>
</organism>
<name>DBF2_YEAST</name>
<accession>P22204</accession>
<accession>D6VUM4</accession>
<proteinExistence type="evidence at protein level"/>
<gene>
    <name type="primary">DBF2</name>
    <name type="ordered locus">YGR092W</name>
</gene>
<evidence type="ECO:0000255" key="1">
    <source>
        <dbReference type="PROSITE-ProRule" id="PRU00159"/>
    </source>
</evidence>
<evidence type="ECO:0000255" key="2">
    <source>
        <dbReference type="PROSITE-ProRule" id="PRU00618"/>
    </source>
</evidence>
<evidence type="ECO:0000255" key="3">
    <source>
        <dbReference type="PROSITE-ProRule" id="PRU10027"/>
    </source>
</evidence>
<evidence type="ECO:0000269" key="4">
    <source>
    </source>
</evidence>
<evidence type="ECO:0000269" key="5">
    <source>
    </source>
</evidence>
<evidence type="ECO:0000269" key="6">
    <source>
    </source>
</evidence>
<evidence type="ECO:0000269" key="7">
    <source>
    </source>
</evidence>
<evidence type="ECO:0000269" key="8">
    <source>
    </source>
</evidence>
<evidence type="ECO:0000269" key="9">
    <source>
    </source>
</evidence>
<evidence type="ECO:0000269" key="10">
    <source>
    </source>
</evidence>
<evidence type="ECO:0000269" key="11">
    <source>
    </source>
</evidence>
<evidence type="ECO:0000269" key="12">
    <source>
    </source>
</evidence>
<evidence type="ECO:0000269" key="13">
    <source>
    </source>
</evidence>
<evidence type="ECO:0000269" key="14">
    <source>
    </source>
</evidence>
<evidence type="ECO:0000269" key="15">
    <source>
    </source>
</evidence>
<evidence type="ECO:0000269" key="16">
    <source>
    </source>
</evidence>
<evidence type="ECO:0000269" key="17">
    <source>
    </source>
</evidence>
<evidence type="ECO:0000269" key="18">
    <source>
    </source>
</evidence>
<evidence type="ECO:0000269" key="19">
    <source>
    </source>
</evidence>
<evidence type="ECO:0000269" key="20">
    <source>
    </source>
</evidence>
<evidence type="ECO:0000269" key="21">
    <source>
    </source>
</evidence>
<evidence type="ECO:0000269" key="22">
    <source>
    </source>
</evidence>
<evidence type="ECO:0000269" key="23">
    <source>
    </source>
</evidence>
<evidence type="ECO:0000269" key="24">
    <source>
    </source>
</evidence>
<evidence type="ECO:0000305" key="25"/>
<evidence type="ECO:0007744" key="26">
    <source>
    </source>
</evidence>
<evidence type="ECO:0007744" key="27">
    <source>
    </source>
</evidence>
<dbReference type="EC" id="2.7.11.1"/>
<dbReference type="EMBL" id="M34146">
    <property type="protein sequence ID" value="AAA34559.1"/>
    <property type="status" value="ALT_INIT"/>
    <property type="molecule type" value="Genomic_DNA"/>
</dbReference>
<dbReference type="EMBL" id="Z72877">
    <property type="protein sequence ID" value="CAA97095.1"/>
    <property type="molecule type" value="Genomic_DNA"/>
</dbReference>
<dbReference type="EMBL" id="BK006941">
    <property type="protein sequence ID" value="DAA08185.1"/>
    <property type="molecule type" value="Genomic_DNA"/>
</dbReference>
<dbReference type="PIR" id="S64387">
    <property type="entry name" value="S64387"/>
</dbReference>
<dbReference type="RefSeq" id="NP_011606.3">
    <property type="nucleotide sequence ID" value="NM_001181221.3"/>
</dbReference>
<dbReference type="PDB" id="5NCN">
    <property type="method" value="X-ray"/>
    <property type="resolution" value="3.50 A"/>
    <property type="chains" value="B=85-173"/>
</dbReference>
<dbReference type="PDBsum" id="5NCN"/>
<dbReference type="SMR" id="P22204"/>
<dbReference type="BioGRID" id="33335">
    <property type="interactions" value="941"/>
</dbReference>
<dbReference type="ComplexPortal" id="CPX-1683">
    <property type="entry name" value="DBF2-MOB1 kinase complex"/>
</dbReference>
<dbReference type="DIP" id="DIP-2319N"/>
<dbReference type="FunCoup" id="P22204">
    <property type="interactions" value="398"/>
</dbReference>
<dbReference type="IntAct" id="P22204">
    <property type="interactions" value="72"/>
</dbReference>
<dbReference type="MINT" id="P22204"/>
<dbReference type="STRING" id="4932.YGR092W"/>
<dbReference type="iPTMnet" id="P22204"/>
<dbReference type="PaxDb" id="4932-YGR092W"/>
<dbReference type="PeptideAtlas" id="P22204"/>
<dbReference type="EnsemblFungi" id="YGR092W_mRNA">
    <property type="protein sequence ID" value="YGR092W"/>
    <property type="gene ID" value="YGR092W"/>
</dbReference>
<dbReference type="GeneID" id="852984"/>
<dbReference type="KEGG" id="sce:YGR092W"/>
<dbReference type="AGR" id="SGD:S000003324"/>
<dbReference type="SGD" id="S000003324">
    <property type="gene designation" value="DBF2"/>
</dbReference>
<dbReference type="VEuPathDB" id="FungiDB:YGR092W"/>
<dbReference type="eggNOG" id="KOG0605">
    <property type="taxonomic scope" value="Eukaryota"/>
</dbReference>
<dbReference type="GeneTree" id="ENSGT00940000176430"/>
<dbReference type="HOGENOM" id="CLU_000288_67_4_1"/>
<dbReference type="InParanoid" id="P22204"/>
<dbReference type="OMA" id="KLRVDQF"/>
<dbReference type="OrthoDB" id="18472at2759"/>
<dbReference type="BioCyc" id="YEAST:G3O-30802-MONOMER"/>
<dbReference type="BRENDA" id="2.7.11.1">
    <property type="organism ID" value="984"/>
</dbReference>
<dbReference type="BioGRID-ORCS" id="852984">
    <property type="hits" value="2 hits in 13 CRISPR screens"/>
</dbReference>
<dbReference type="CD-CODE" id="876000F7">
    <property type="entry name" value="Centrosome"/>
</dbReference>
<dbReference type="PRO" id="PR:P22204"/>
<dbReference type="Proteomes" id="UP000002311">
    <property type="component" value="Chromosome VII"/>
</dbReference>
<dbReference type="RNAct" id="P22204">
    <property type="molecule type" value="protein"/>
</dbReference>
<dbReference type="GO" id="GO:0005935">
    <property type="term" value="C:cellular bud neck"/>
    <property type="evidence" value="ECO:0000314"/>
    <property type="project" value="SGD"/>
</dbReference>
<dbReference type="GO" id="GO:0005634">
    <property type="term" value="C:nucleus"/>
    <property type="evidence" value="ECO:0007669"/>
    <property type="project" value="UniProtKB-SubCell"/>
</dbReference>
<dbReference type="GO" id="GO:0034973">
    <property type="term" value="C:Sid2-Mob1 complex"/>
    <property type="evidence" value="ECO:0000314"/>
    <property type="project" value="ComplexPortal"/>
</dbReference>
<dbReference type="GO" id="GO:0005816">
    <property type="term" value="C:spindle pole body"/>
    <property type="evidence" value="ECO:0000314"/>
    <property type="project" value="SGD"/>
</dbReference>
<dbReference type="GO" id="GO:0005524">
    <property type="term" value="F:ATP binding"/>
    <property type="evidence" value="ECO:0007669"/>
    <property type="project" value="UniProtKB-KW"/>
</dbReference>
<dbReference type="GO" id="GO:0004672">
    <property type="term" value="F:protein kinase activity"/>
    <property type="evidence" value="ECO:0007005"/>
    <property type="project" value="SGD"/>
</dbReference>
<dbReference type="GO" id="GO:0106310">
    <property type="term" value="F:protein serine kinase activity"/>
    <property type="evidence" value="ECO:0007669"/>
    <property type="project" value="RHEA"/>
</dbReference>
<dbReference type="GO" id="GO:0004674">
    <property type="term" value="F:protein serine/threonine kinase activity"/>
    <property type="evidence" value="ECO:0000314"/>
    <property type="project" value="SGD"/>
</dbReference>
<dbReference type="GO" id="GO:0003723">
    <property type="term" value="F:RNA binding"/>
    <property type="evidence" value="ECO:0007669"/>
    <property type="project" value="UniProtKB-KW"/>
</dbReference>
<dbReference type="GO" id="GO:0010458">
    <property type="term" value="P:exit from mitosis"/>
    <property type="evidence" value="ECO:0000303"/>
    <property type="project" value="ComplexPortal"/>
</dbReference>
<dbReference type="GO" id="GO:0035556">
    <property type="term" value="P:intracellular signal transduction"/>
    <property type="evidence" value="ECO:0000318"/>
    <property type="project" value="GO_Central"/>
</dbReference>
<dbReference type="GO" id="GO:0000280">
    <property type="term" value="P:nuclear division"/>
    <property type="evidence" value="ECO:0000315"/>
    <property type="project" value="SGD"/>
</dbReference>
<dbReference type="GO" id="GO:0032465">
    <property type="term" value="P:regulation of cytokinesis"/>
    <property type="evidence" value="ECO:0000314"/>
    <property type="project" value="ComplexPortal"/>
</dbReference>
<dbReference type="GO" id="GO:1901901">
    <property type="term" value="P:regulation of protein localization to cell division site involved in cytokinesis"/>
    <property type="evidence" value="ECO:0000315"/>
    <property type="project" value="SGD"/>
</dbReference>
<dbReference type="GO" id="GO:0007035">
    <property type="term" value="P:vacuolar acidification"/>
    <property type="evidence" value="ECO:0000315"/>
    <property type="project" value="SGD"/>
</dbReference>
<dbReference type="CDD" id="cd21776">
    <property type="entry name" value="MobB_Sid2p-like"/>
    <property type="match status" value="1"/>
</dbReference>
<dbReference type="CDD" id="cd05600">
    <property type="entry name" value="STKc_Sid2p_like"/>
    <property type="match status" value="1"/>
</dbReference>
<dbReference type="FunFam" id="1.10.510.10:FF:000141">
    <property type="entry name" value="Non-specific serine/threonine protein kinase"/>
    <property type="match status" value="1"/>
</dbReference>
<dbReference type="FunFam" id="1.10.510.10:FF:000319">
    <property type="entry name" value="Non-specific serine/threonine protein kinase"/>
    <property type="match status" value="1"/>
</dbReference>
<dbReference type="FunFam" id="3.30.200.20:FF:000809">
    <property type="entry name" value="Ser/Thr Kinase"/>
    <property type="match status" value="1"/>
</dbReference>
<dbReference type="Gene3D" id="3.30.200.20">
    <property type="entry name" value="Phosphorylase Kinase, domain 1"/>
    <property type="match status" value="2"/>
</dbReference>
<dbReference type="Gene3D" id="1.10.510.10">
    <property type="entry name" value="Transferase(Phosphotransferase) domain 1"/>
    <property type="match status" value="2"/>
</dbReference>
<dbReference type="InterPro" id="IPR000961">
    <property type="entry name" value="AGC-kinase_C"/>
</dbReference>
<dbReference type="InterPro" id="IPR011009">
    <property type="entry name" value="Kinase-like_dom_sf"/>
</dbReference>
<dbReference type="InterPro" id="IPR017892">
    <property type="entry name" value="Pkinase_C"/>
</dbReference>
<dbReference type="InterPro" id="IPR000719">
    <property type="entry name" value="Prot_kinase_dom"/>
</dbReference>
<dbReference type="InterPro" id="IPR017441">
    <property type="entry name" value="Protein_kinase_ATP_BS"/>
</dbReference>
<dbReference type="InterPro" id="IPR008271">
    <property type="entry name" value="Ser/Thr_kinase_AS"/>
</dbReference>
<dbReference type="InterPro" id="IPR050236">
    <property type="entry name" value="Ser_Thr_kinase_AGC"/>
</dbReference>
<dbReference type="PANTHER" id="PTHR24356:SF417">
    <property type="entry name" value="CELL CYCLE PROTEIN KINASE DBF2-RELATED"/>
    <property type="match status" value="1"/>
</dbReference>
<dbReference type="PANTHER" id="PTHR24356">
    <property type="entry name" value="SERINE/THREONINE-PROTEIN KINASE"/>
    <property type="match status" value="1"/>
</dbReference>
<dbReference type="Pfam" id="PF00069">
    <property type="entry name" value="Pkinase"/>
    <property type="match status" value="2"/>
</dbReference>
<dbReference type="Pfam" id="PF00433">
    <property type="entry name" value="Pkinase_C"/>
    <property type="match status" value="1"/>
</dbReference>
<dbReference type="SMART" id="SM00133">
    <property type="entry name" value="S_TK_X"/>
    <property type="match status" value="1"/>
</dbReference>
<dbReference type="SMART" id="SM00220">
    <property type="entry name" value="S_TKc"/>
    <property type="match status" value="1"/>
</dbReference>
<dbReference type="SUPFAM" id="SSF56112">
    <property type="entry name" value="Protein kinase-like (PK-like)"/>
    <property type="match status" value="1"/>
</dbReference>
<dbReference type="PROSITE" id="PS51285">
    <property type="entry name" value="AGC_KINASE_CTER"/>
    <property type="match status" value="1"/>
</dbReference>
<dbReference type="PROSITE" id="PS00107">
    <property type="entry name" value="PROTEIN_KINASE_ATP"/>
    <property type="match status" value="1"/>
</dbReference>
<dbReference type="PROSITE" id="PS50011">
    <property type="entry name" value="PROTEIN_KINASE_DOM"/>
    <property type="match status" value="1"/>
</dbReference>
<dbReference type="PROSITE" id="PS00108">
    <property type="entry name" value="PROTEIN_KINASE_ST"/>
    <property type="match status" value="1"/>
</dbReference>
<comment type="function">
    <text evidence="4 5 6 7 8 9 10 12 13 14 15 16 17 19 20 21 22 23 24">Ser/Thr-protein kinase involved in the mitotic exit network (MEN) and required after the metaphase to anaphase cell cycle transition. Phosphorylates CHS2 to regulate its dynamics and chitin synthesis at the division site during cytokinesis. Coordinates septin and actomyosin ring (AMR) functions during cytokinesis through the phosphorylation of HOF1. In complex with MOB1, phosphorylates CDC14 at sites adjacent to its nuclear localization sequence, thereby retaining CDC14 in the cytoplasm. Also binds to SWI5 and CLB2 mRNAs cotranscriptionally to regulate their decay. In the nucleus, the DBF2-MOB1 complex regulates passenger protein localization during anaphase. Mediates sorbic acid stress tolerance through promoting vacuolar H(+)-ATPase function, probably through phosphorylation of VMA1 and VMA2 subunits.</text>
</comment>
<comment type="catalytic activity">
    <reaction>
        <text>L-seryl-[protein] + ATP = O-phospho-L-seryl-[protein] + ADP + H(+)</text>
        <dbReference type="Rhea" id="RHEA:17989"/>
        <dbReference type="Rhea" id="RHEA-COMP:9863"/>
        <dbReference type="Rhea" id="RHEA-COMP:11604"/>
        <dbReference type="ChEBI" id="CHEBI:15378"/>
        <dbReference type="ChEBI" id="CHEBI:29999"/>
        <dbReference type="ChEBI" id="CHEBI:30616"/>
        <dbReference type="ChEBI" id="CHEBI:83421"/>
        <dbReference type="ChEBI" id="CHEBI:456216"/>
        <dbReference type="EC" id="2.7.11.1"/>
    </reaction>
</comment>
<comment type="catalytic activity">
    <reaction>
        <text>L-threonyl-[protein] + ATP = O-phospho-L-threonyl-[protein] + ADP + H(+)</text>
        <dbReference type="Rhea" id="RHEA:46608"/>
        <dbReference type="Rhea" id="RHEA-COMP:11060"/>
        <dbReference type="Rhea" id="RHEA-COMP:11605"/>
        <dbReference type="ChEBI" id="CHEBI:15378"/>
        <dbReference type="ChEBI" id="CHEBI:30013"/>
        <dbReference type="ChEBI" id="CHEBI:30616"/>
        <dbReference type="ChEBI" id="CHEBI:61977"/>
        <dbReference type="ChEBI" id="CHEBI:456216"/>
        <dbReference type="EC" id="2.7.11.1"/>
    </reaction>
</comment>
<comment type="activity regulation">
    <text evidence="4 7 9 10 16">Kinase activity is regulated by BUB2, CDC15 and CDC5, and is maximal during nuclear division. CDK1 kinase inhibits cellular DBF2-MOB1 kinase activity via phosphorylation of both CDC15 and MOB1.</text>
</comment>
<comment type="subunit">
    <text evidence="23">Interacts with MOB1. MOB1-binding is required for a late mitotic event.</text>
</comment>
<comment type="interaction">
    <interactant intactId="EBI-5569">
        <id>P22204</id>
    </interactant>
    <interactant intactId="EBI-8394">
        <id>P38074</id>
        <label>HMT1</label>
    </interactant>
    <organismsDiffer>false</organismsDiffer>
    <experiments>4</experiments>
</comment>
<comment type="interaction">
    <interactant intactId="EBI-5569">
        <id>P22204</id>
    </interactant>
    <interactant intactId="EBI-11119">
        <id>P40484</id>
        <label>MOB1</label>
    </interactant>
    <organismsDiffer>false</organismsDiffer>
    <experiments>16</experiments>
</comment>
<comment type="subcellular location">
    <subcellularLocation>
        <location>Cytoplasm</location>
        <location>Cytoskeleton</location>
        <location>Microtubule organizing center</location>
        <location>Spindle pole body</location>
    </subcellularLocation>
    <subcellularLocation>
        <location>Bud neck</location>
    </subcellularLocation>
    <subcellularLocation>
        <location>Nucleus</location>
    </subcellularLocation>
    <text>Localizes on spindle ole body (SPB) for much of the cell cycle and migrates from there to the bud neck in late mitosis. SPB localization during anaphase coincides with activation kinase activity and depends on TEM1 and CDC15. In absence of BUB2, localizes to SPB in cell cycle stages other than anaphase and telophase.</text>
</comment>
<comment type="induction">
    <text evidence="18 22">Periodically expressed in the cell cycle, with a peak before the onset of budding.</text>
</comment>
<comment type="PTM">
    <text evidence="7 22">Phosphorylation of Ser-374 and Thr-544 by CDC15 is essential for activation of DBF2 kinase activity.</text>
</comment>
<comment type="miscellaneous">
    <text evidence="11">Present with 3500 molecules/cell in log phase SD medium.</text>
</comment>
<comment type="similarity">
    <text evidence="1">Belongs to the protein kinase superfamily. Ser/Thr protein kinase family.</text>
</comment>
<comment type="sequence caution" evidence="25">
    <conflict type="erroneous initiation">
        <sequence resource="EMBL-CDS" id="AAA34559"/>
    </conflict>
    <text>Truncated N-terminus.</text>
</comment>
<protein>
    <recommendedName>
        <fullName>Cell cycle protein kinase DBF2</fullName>
        <ecNumber>2.7.11.1</ecNumber>
    </recommendedName>
    <alternativeName>
        <fullName>Dumbbell forming protein 2</fullName>
    </alternativeName>
</protein>